<feature type="signal peptide" evidence="2">
    <location>
        <begin position="1"/>
        <end position="19"/>
    </location>
</feature>
<feature type="chain" id="PRO_0000295792" description="Glycoprotein">
    <location>
        <begin position="20"/>
        <end position="525"/>
    </location>
</feature>
<feature type="topological domain" description="Virion surface" evidence="2">
    <location>
        <begin position="20"/>
        <end position="459"/>
    </location>
</feature>
<feature type="transmembrane region" description="Helical" evidence="2">
    <location>
        <begin position="460"/>
        <end position="480"/>
    </location>
</feature>
<feature type="topological domain" description="Intravirion" evidence="2">
    <location>
        <begin position="481"/>
        <end position="525"/>
    </location>
</feature>
<feature type="region of interest" description="Disordered" evidence="3">
    <location>
        <begin position="505"/>
        <end position="525"/>
    </location>
</feature>
<feature type="lipid moiety-binding region" description="S-palmitoyl cysteine; by host" evidence="1">
    <location>
        <position position="480"/>
    </location>
</feature>
<feature type="glycosylation site" description="N-linked (GlcNAc...) asparagine; by host" evidence="1">
    <location>
        <position position="338"/>
    </location>
</feature>
<proteinExistence type="evidence at protein level"/>
<evidence type="ECO:0000250" key="1"/>
<evidence type="ECO:0000255" key="2"/>
<evidence type="ECO:0000256" key="3">
    <source>
        <dbReference type="SAM" id="MobiDB-lite"/>
    </source>
</evidence>
<evidence type="ECO:0000305" key="4"/>
<name>GLYCO_ABLVB</name>
<organism>
    <name type="scientific">Australian bat lyssavirus (isolate Bat/AUS/1996)</name>
    <name type="common">ABLV</name>
    <dbReference type="NCBI Taxonomy" id="446561"/>
    <lineage>
        <taxon>Viruses</taxon>
        <taxon>Riboviria</taxon>
        <taxon>Orthornavirae</taxon>
        <taxon>Negarnaviricota</taxon>
        <taxon>Haploviricotina</taxon>
        <taxon>Monjiviricetes</taxon>
        <taxon>Mononegavirales</taxon>
        <taxon>Rhabdoviridae</taxon>
        <taxon>Alpharhabdovirinae</taxon>
        <taxon>Lyssavirus</taxon>
        <taxon>Lyssavirus australis</taxon>
    </lineage>
</organism>
<comment type="function">
    <text evidence="1">Attaches the virus to host cellular receptor, inducing endocytosis of the virion. In the endosome, the acidic pH induces conformational changes in the glycoprotein trimer, which trigger fusion between virus and cell membrane. There is convincing in vitro evidence that the muscular form of the nicotinic acetylcholine receptor (nAChR), the neuronal cell adhesion molecule (NCAM), and the p75 neurotrophin receptor (p75NTR) bind glycoprotein and thereby facilitate rabies virus entry into cells (By similarity).</text>
</comment>
<comment type="subunit">
    <text evidence="1">Homotrimer. Interacts with matrix protein (By similarity).</text>
</comment>
<comment type="subcellular location">
    <subcellularLocation>
        <location evidence="4">Virion membrane</location>
        <topology evidence="4">Single-pass type I membrane protein</topology>
    </subcellularLocation>
</comment>
<comment type="PTM">
    <text evidence="1">Glycosylated and palmitoylated by host. Glycosylation is crucial for glycoprotein export at the cell surface (By similarity).</text>
</comment>
<comment type="biotechnology">
    <text>Primary surface antigen capable of inducing and reacting with virus-neutralizing antibodies. Almost all human and veterinary vaccines are based on the functional aspects of the G protein.</text>
</comment>
<comment type="miscellaneous">
    <text evidence="1">Arg-352 is highly involved in rabies virus pathogenicity. Its mutation dramatically attenuates the virus (By similarity).</text>
</comment>
<comment type="similarity">
    <text evidence="4">Belongs to the lyssavirus glycoprotein family.</text>
</comment>
<protein>
    <recommendedName>
        <fullName>Glycoprotein</fullName>
    </recommendedName>
</protein>
<accession>Q9QSP1</accession>
<reference key="1">
    <citation type="journal article" date="2002" name="Virus Res.">
        <title>Characterisation of an Australian bat lyssavirus variant isolated from an insectivorous bat.</title>
        <authorList>
            <person name="Gould A.R."/>
            <person name="Kattenbelt J.A."/>
            <person name="Gumley S.G."/>
            <person name="Lunt R.A."/>
        </authorList>
    </citation>
    <scope>NUCLEOTIDE SEQUENCE [GENOMIC RNA]</scope>
</reference>
<dbReference type="EMBL" id="AF081020">
    <property type="protein sequence ID" value="AAD47899.1"/>
    <property type="molecule type" value="Genomic_RNA"/>
</dbReference>
<dbReference type="RefSeq" id="NP_478342.1">
    <property type="nucleotide sequence ID" value="NC_003243.1"/>
</dbReference>
<dbReference type="SMR" id="Q9QSP1"/>
<dbReference type="GlyCosmos" id="Q9QSP1">
    <property type="glycosylation" value="1 site, No reported glycans"/>
</dbReference>
<dbReference type="GeneID" id="926730"/>
<dbReference type="KEGG" id="vg:926730"/>
<dbReference type="Proteomes" id="UP000006934">
    <property type="component" value="Segment"/>
</dbReference>
<dbReference type="GO" id="GO:0016020">
    <property type="term" value="C:membrane"/>
    <property type="evidence" value="ECO:0007669"/>
    <property type="project" value="UniProtKB-KW"/>
</dbReference>
<dbReference type="GO" id="GO:0019031">
    <property type="term" value="C:viral envelope"/>
    <property type="evidence" value="ECO:0007669"/>
    <property type="project" value="UniProtKB-KW"/>
</dbReference>
<dbReference type="GO" id="GO:0055036">
    <property type="term" value="C:virion membrane"/>
    <property type="evidence" value="ECO:0007669"/>
    <property type="project" value="UniProtKB-SubCell"/>
</dbReference>
<dbReference type="Gene3D" id="2.30.29.130">
    <property type="match status" value="1"/>
</dbReference>
<dbReference type="InterPro" id="IPR055448">
    <property type="entry name" value="PH_Rhabdo_glycop"/>
</dbReference>
<dbReference type="InterPro" id="IPR055447">
    <property type="entry name" value="Rhabdo_glycop_CD"/>
</dbReference>
<dbReference type="InterPro" id="IPR001903">
    <property type="entry name" value="Rhabdo_glycop_FD"/>
</dbReference>
<dbReference type="Pfam" id="PF24834">
    <property type="entry name" value="PH_Rhabdo_glycop"/>
    <property type="match status" value="1"/>
</dbReference>
<dbReference type="Pfam" id="PF24833">
    <property type="entry name" value="Rhabdo_glycop_CD"/>
    <property type="match status" value="1"/>
</dbReference>
<dbReference type="Pfam" id="PF00974">
    <property type="entry name" value="Rhabdo_glycop_FD"/>
    <property type="match status" value="1"/>
</dbReference>
<dbReference type="SUPFAM" id="SSF161008">
    <property type="entry name" value="Viral glycoprotein ectodomain-like"/>
    <property type="match status" value="1"/>
</dbReference>
<sequence length="525" mass="59131">MLLQVILLVSLTAILPCTGQFPLYAIPDKLGPWSPIDIHHLSCPNNLIVEDEGCTSLSGFSYMELKVGFITTIKVSGFTCTGVVTESETYTNFFGYVTTTFKRKHFRPTPESCRKAYNWKIAGDPRYEESLHNPYPDYHWLRTVTTTKESLLIISPSVVDMDPYDKSLHSRMFPKGSCSGASIPSVFCSTNHDYTLWMPEDSNSGMSCDIFTMSKGKKASKGGKVCGFVDERGLYKSLKGACKLKLCGISGLRLLDGSWVSIQNHEEVKWCSPNQLVNIHDFNADEIEHLIVEELIKEREECLDALESIITTKSVSFRRLSHLRKLVPGFGKAYTIINKTLMEADAHYKSVRTWDEIIPSKGCLKVREKCHPPYNGVFFNGIILGPDGQVLIPEMQSSLLHQHTELLESSVIPLIHPLADPSTIFRGDDEAEGFIEVHLPDIQKQVSGIDLGLSEWERYLIIGISAIILFILAIIFTICCRRCKRRKKIRTDHIELDRKVSVTSQSGKSIPSWESYKSRQGHSRS</sequence>
<organismHost>
    <name type="scientific">Homo sapiens</name>
    <name type="common">Human</name>
    <dbReference type="NCBI Taxonomy" id="9606"/>
</organismHost>
<organismHost>
    <name type="scientific">Pteropus alecto</name>
    <name type="common">Black flying fox</name>
    <dbReference type="NCBI Taxonomy" id="9402"/>
</organismHost>
<organismHost>
    <name type="scientific">Pteropus conspicillatus</name>
    <name type="common">Spectacled flying fox</name>
    <dbReference type="NCBI Taxonomy" id="328804"/>
</organismHost>
<organismHost>
    <name type="scientific">Pteropus poliocephalus</name>
    <name type="common">Grey-headed flying fox</name>
    <dbReference type="NCBI Taxonomy" id="9403"/>
</organismHost>
<organismHost>
    <name type="scientific">Pteropus scapulatus</name>
    <name type="common">Little red flying fox</name>
    <dbReference type="NCBI Taxonomy" id="94117"/>
</organismHost>
<organismHost>
    <name type="scientific">Saccolaimus</name>
    <dbReference type="NCBI Taxonomy" id="446909"/>
</organismHost>
<keyword id="KW-0325">Glycoprotein</keyword>
<keyword id="KW-0449">Lipoprotein</keyword>
<keyword id="KW-0472">Membrane</keyword>
<keyword id="KW-0564">Palmitate</keyword>
<keyword id="KW-1185">Reference proteome</keyword>
<keyword id="KW-0732">Signal</keyword>
<keyword id="KW-0812">Transmembrane</keyword>
<keyword id="KW-1133">Transmembrane helix</keyword>
<keyword id="KW-0261">Viral envelope protein</keyword>
<keyword id="KW-0946">Virion</keyword>
<gene>
    <name type="primary">G</name>
</gene>